<gene>
    <name type="primary">Znf511</name>
    <name type="synonym">Zfp511</name>
</gene>
<sequence length="227" mass="25761">MLLPPALYSRLAGEPGAAEPLPVERNPAAGEAPFRFAPRAVRFPRDHEFFEDGDVQRHLYLQDMLTQVSETPEKSMVPEFTCQVAGCCQVFAAIEDYQHHYHMMHGNTCSFCNRAFPSGHLLDVHILEWHDSLFQILAQRQDMYQCLVESCPEKFKTSQDRKDHMVRLHLYPADFRFDKPKTNRGPAMPAAADAATRAPTDDSDAMEICSEPAAPPPCRRTYSHRSV</sequence>
<protein>
    <recommendedName>
        <fullName>Zinc finger protein 511</fullName>
    </recommendedName>
</protein>
<proteinExistence type="evidence at protein level"/>
<name>ZN511_MOUSE</name>
<feature type="chain" id="PRO_0000353091" description="Zinc finger protein 511">
    <location>
        <begin position="1"/>
        <end position="227"/>
    </location>
</feature>
<feature type="zinc finger region" description="C2H2-type 1">
    <location>
        <begin position="80"/>
        <end position="105"/>
    </location>
</feature>
<feature type="zinc finger region" description="C2H2-type 2">
    <location>
        <begin position="107"/>
        <end position="130"/>
    </location>
</feature>
<feature type="zinc finger region" description="C2H2-type 3">
    <location>
        <begin position="144"/>
        <end position="169"/>
    </location>
</feature>
<feature type="region of interest" description="Disordered" evidence="2">
    <location>
        <begin position="180"/>
        <end position="204"/>
    </location>
</feature>
<feature type="compositionally biased region" description="Low complexity" evidence="2">
    <location>
        <begin position="186"/>
        <end position="198"/>
    </location>
</feature>
<feature type="splice variant" id="VSP_035623" description="In isoform 2." evidence="3">
    <original>SV</original>
    <variation>IPSTVCFGQGAARGFKSTKKKNKHH</variation>
    <location>
        <begin position="226"/>
        <end position="227"/>
    </location>
</feature>
<feature type="modified residue" description="Omega-N-methylarginine" evidence="5">
    <location sequence="Q6P0X2-2">
        <position position="238"/>
    </location>
</feature>
<reference key="1">
    <citation type="journal article" date="2009" name="PLoS Biol.">
        <title>Lineage-specific biology revealed by a finished genome assembly of the mouse.</title>
        <authorList>
            <person name="Church D.M."/>
            <person name="Goodstadt L."/>
            <person name="Hillier L.W."/>
            <person name="Zody M.C."/>
            <person name="Goldstein S."/>
            <person name="She X."/>
            <person name="Bult C.J."/>
            <person name="Agarwala R."/>
            <person name="Cherry J.L."/>
            <person name="DiCuccio M."/>
            <person name="Hlavina W."/>
            <person name="Kapustin Y."/>
            <person name="Meric P."/>
            <person name="Maglott D."/>
            <person name="Birtle Z."/>
            <person name="Marques A.C."/>
            <person name="Graves T."/>
            <person name="Zhou S."/>
            <person name="Teague B."/>
            <person name="Potamousis K."/>
            <person name="Churas C."/>
            <person name="Place M."/>
            <person name="Herschleb J."/>
            <person name="Runnheim R."/>
            <person name="Forrest D."/>
            <person name="Amos-Landgraf J."/>
            <person name="Schwartz D.C."/>
            <person name="Cheng Z."/>
            <person name="Lindblad-Toh K."/>
            <person name="Eichler E.E."/>
            <person name="Ponting C.P."/>
        </authorList>
    </citation>
    <scope>NUCLEOTIDE SEQUENCE [LARGE SCALE GENOMIC DNA]</scope>
    <source>
        <strain>C57BL/6J</strain>
    </source>
</reference>
<reference key="2">
    <citation type="journal article" date="2004" name="Genome Res.">
        <title>The status, quality, and expansion of the NIH full-length cDNA project: the Mammalian Gene Collection (MGC).</title>
        <authorList>
            <consortium name="The MGC Project Team"/>
        </authorList>
    </citation>
    <scope>NUCLEOTIDE SEQUENCE [LARGE SCALE MRNA] (ISOFORM 2)</scope>
    <source>
        <strain>C57BL/6J</strain>
        <tissue>Thymus</tissue>
    </source>
</reference>
<reference key="3">
    <citation type="journal article" date="2014" name="Mol. Cell. Proteomics">
        <title>Immunoaffinity enrichment and mass spectrometry analysis of protein methylation.</title>
        <authorList>
            <person name="Guo A."/>
            <person name="Gu H."/>
            <person name="Zhou J."/>
            <person name="Mulhern D."/>
            <person name="Wang Y."/>
            <person name="Lee K.A."/>
            <person name="Yang V."/>
            <person name="Aguiar M."/>
            <person name="Kornhauser J."/>
            <person name="Jia X."/>
            <person name="Ren J."/>
            <person name="Beausoleil S.A."/>
            <person name="Silva J.C."/>
            <person name="Vemulapalli V."/>
            <person name="Bedford M.T."/>
            <person name="Comb M.J."/>
        </authorList>
    </citation>
    <scope>METHYLATION [LARGE SCALE ANALYSIS] AT ARG-238 (ISOFORM 2)</scope>
    <scope>IDENTIFICATION BY MASS SPECTROMETRY [LARGE SCALE ANALYSIS]</scope>
    <source>
        <tissue>Embryo</tissue>
    </source>
</reference>
<keyword id="KW-0025">Alternative splicing</keyword>
<keyword id="KW-0238">DNA-binding</keyword>
<keyword id="KW-0479">Metal-binding</keyword>
<keyword id="KW-0488">Methylation</keyword>
<keyword id="KW-0539">Nucleus</keyword>
<keyword id="KW-1185">Reference proteome</keyword>
<keyword id="KW-0677">Repeat</keyword>
<keyword id="KW-0804">Transcription</keyword>
<keyword id="KW-0805">Transcription regulation</keyword>
<keyword id="KW-0862">Zinc</keyword>
<keyword id="KW-0863">Zinc-finger</keyword>
<dbReference type="EMBL" id="AC109205">
    <property type="status" value="NOT_ANNOTATED_CDS"/>
    <property type="molecule type" value="Genomic_DNA"/>
</dbReference>
<dbReference type="EMBL" id="BC065404">
    <property type="protein sequence ID" value="AAH65404.1"/>
    <property type="molecule type" value="mRNA"/>
</dbReference>
<dbReference type="CCDS" id="CCDS52431.1">
    <molecule id="Q6P0X2-2"/>
</dbReference>
<dbReference type="RefSeq" id="NP_081477.1">
    <molecule id="Q6P0X2-2"/>
    <property type="nucleotide sequence ID" value="NM_027201.1"/>
</dbReference>
<dbReference type="FunCoup" id="Q6P0X2">
    <property type="interactions" value="908"/>
</dbReference>
<dbReference type="STRING" id="10090.ENSMUSP00000129154"/>
<dbReference type="iPTMnet" id="Q6P0X2"/>
<dbReference type="PhosphoSitePlus" id="Q6P0X2"/>
<dbReference type="SwissPalm" id="Q6P0X2"/>
<dbReference type="PaxDb" id="10090-ENSMUSP00000129154"/>
<dbReference type="PeptideAtlas" id="Q6P0X2"/>
<dbReference type="ProteomicsDB" id="299583">
    <molecule id="Q6P0X2-2"/>
</dbReference>
<dbReference type="Pumba" id="Q6P0X2"/>
<dbReference type="Antibodypedia" id="32647">
    <property type="antibodies" value="57 antibodies from 15 providers"/>
</dbReference>
<dbReference type="Ensembl" id="ENSMUST00000168194.3">
    <molecule id="Q6P0X2-2"/>
    <property type="protein sequence ID" value="ENSMUSP00000129154.2"/>
    <property type="gene ID" value="ENSMUSG00000025470.12"/>
</dbReference>
<dbReference type="GeneID" id="69752"/>
<dbReference type="KEGG" id="mmu:69752"/>
<dbReference type="UCSC" id="uc012fwe.1">
    <molecule id="Q6P0X2-2"/>
    <property type="organism name" value="mouse"/>
</dbReference>
<dbReference type="AGR" id="MGI:1917002"/>
<dbReference type="CTD" id="69752"/>
<dbReference type="MGI" id="MGI:1917002">
    <property type="gene designation" value="Zfp511"/>
</dbReference>
<dbReference type="VEuPathDB" id="HostDB:ENSMUSG00000025470"/>
<dbReference type="eggNOG" id="KOG4173">
    <property type="taxonomic scope" value="Eukaryota"/>
</dbReference>
<dbReference type="GeneTree" id="ENSGT00390000011381"/>
<dbReference type="HOGENOM" id="CLU_092647_0_0_1"/>
<dbReference type="InParanoid" id="Q6P0X2"/>
<dbReference type="OMA" id="LEDYQHH"/>
<dbReference type="OrthoDB" id="18440at2759"/>
<dbReference type="PhylomeDB" id="Q6P0X2"/>
<dbReference type="TreeFam" id="TF323277"/>
<dbReference type="BioGRID-ORCS" id="69752">
    <property type="hits" value="0 hits in 77 CRISPR screens"/>
</dbReference>
<dbReference type="PRO" id="PR:Q6P0X2"/>
<dbReference type="Proteomes" id="UP000000589">
    <property type="component" value="Chromosome 7"/>
</dbReference>
<dbReference type="RNAct" id="Q6P0X2">
    <property type="molecule type" value="protein"/>
</dbReference>
<dbReference type="Bgee" id="ENSMUSG00000025470">
    <property type="expression patterns" value="Expressed in embryonic brain and 230 other cell types or tissues"/>
</dbReference>
<dbReference type="ExpressionAtlas" id="Q6P0X2">
    <property type="expression patterns" value="baseline and differential"/>
</dbReference>
<dbReference type="GO" id="GO:0005634">
    <property type="term" value="C:nucleus"/>
    <property type="evidence" value="ECO:0007669"/>
    <property type="project" value="UniProtKB-SubCell"/>
</dbReference>
<dbReference type="GO" id="GO:0003677">
    <property type="term" value="F:DNA binding"/>
    <property type="evidence" value="ECO:0007669"/>
    <property type="project" value="UniProtKB-KW"/>
</dbReference>
<dbReference type="GO" id="GO:0008270">
    <property type="term" value="F:zinc ion binding"/>
    <property type="evidence" value="ECO:0007669"/>
    <property type="project" value="UniProtKB-KW"/>
</dbReference>
<dbReference type="Gene3D" id="3.30.160.60">
    <property type="entry name" value="Classic Zinc Finger"/>
    <property type="match status" value="1"/>
</dbReference>
<dbReference type="InterPro" id="IPR039258">
    <property type="entry name" value="ZNF511"/>
</dbReference>
<dbReference type="InterPro" id="IPR013087">
    <property type="entry name" value="Znf_C2H2_type"/>
</dbReference>
<dbReference type="PANTHER" id="PTHR21354">
    <property type="entry name" value="ZINC FINGER PROTEIN 511"/>
    <property type="match status" value="1"/>
</dbReference>
<dbReference type="PANTHER" id="PTHR21354:SF0">
    <property type="entry name" value="ZINC FINGER PROTEIN 511"/>
    <property type="match status" value="1"/>
</dbReference>
<dbReference type="SMART" id="SM00355">
    <property type="entry name" value="ZnF_C2H2"/>
    <property type="match status" value="3"/>
</dbReference>
<dbReference type="PROSITE" id="PS00028">
    <property type="entry name" value="ZINC_FINGER_C2H2_1"/>
    <property type="match status" value="3"/>
</dbReference>
<accession>Q6P0X2</accession>
<evidence type="ECO:0000250" key="1"/>
<evidence type="ECO:0000256" key="2">
    <source>
        <dbReference type="SAM" id="MobiDB-lite"/>
    </source>
</evidence>
<evidence type="ECO:0000303" key="3">
    <source>
    </source>
</evidence>
<evidence type="ECO:0000305" key="4"/>
<evidence type="ECO:0007744" key="5">
    <source>
    </source>
</evidence>
<organism>
    <name type="scientific">Mus musculus</name>
    <name type="common">Mouse</name>
    <dbReference type="NCBI Taxonomy" id="10090"/>
    <lineage>
        <taxon>Eukaryota</taxon>
        <taxon>Metazoa</taxon>
        <taxon>Chordata</taxon>
        <taxon>Craniata</taxon>
        <taxon>Vertebrata</taxon>
        <taxon>Euteleostomi</taxon>
        <taxon>Mammalia</taxon>
        <taxon>Eutheria</taxon>
        <taxon>Euarchontoglires</taxon>
        <taxon>Glires</taxon>
        <taxon>Rodentia</taxon>
        <taxon>Myomorpha</taxon>
        <taxon>Muroidea</taxon>
        <taxon>Muridae</taxon>
        <taxon>Murinae</taxon>
        <taxon>Mus</taxon>
        <taxon>Mus</taxon>
    </lineage>
</organism>
<comment type="function">
    <text>May be involved in transcriptional regulation.</text>
</comment>
<comment type="subcellular location">
    <subcellularLocation>
        <location evidence="1">Nucleus</location>
    </subcellularLocation>
</comment>
<comment type="alternative products">
    <event type="alternative splicing"/>
    <isoform>
        <id>Q6P0X2-1</id>
        <name>1</name>
        <sequence type="displayed"/>
    </isoform>
    <isoform>
        <id>Q6P0X2-2</id>
        <name>2</name>
        <sequence type="described" ref="VSP_035623"/>
    </isoform>
</comment>
<comment type="similarity">
    <text evidence="4">Belongs to the krueppel C2H2-type zinc-finger protein family.</text>
</comment>